<gene>
    <name evidence="1" type="primary">hldD</name>
    <name type="synonym">rfaD</name>
    <name type="ordered locus">c4445</name>
</gene>
<reference key="1">
    <citation type="journal article" date="2002" name="Proc. Natl. Acad. Sci. U.S.A.">
        <title>Extensive mosaic structure revealed by the complete genome sequence of uropathogenic Escherichia coli.</title>
        <authorList>
            <person name="Welch R.A."/>
            <person name="Burland V."/>
            <person name="Plunkett G. III"/>
            <person name="Redford P."/>
            <person name="Roesch P."/>
            <person name="Rasko D."/>
            <person name="Buckles E.L."/>
            <person name="Liou S.-R."/>
            <person name="Boutin A."/>
            <person name="Hackett J."/>
            <person name="Stroud D."/>
            <person name="Mayhew G.F."/>
            <person name="Rose D.J."/>
            <person name="Zhou S."/>
            <person name="Schwartz D.C."/>
            <person name="Perna N.T."/>
            <person name="Mobley H.L.T."/>
            <person name="Donnenberg M.S."/>
            <person name="Blattner F.R."/>
        </authorList>
    </citation>
    <scope>NUCLEOTIDE SEQUENCE [LARGE SCALE GENOMIC DNA]</scope>
    <source>
        <strain>CFT073 / ATCC 700928 / UPEC</strain>
    </source>
</reference>
<keyword id="KW-0007">Acetylation</keyword>
<keyword id="KW-0119">Carbohydrate metabolism</keyword>
<keyword id="KW-0413">Isomerase</keyword>
<keyword id="KW-0521">NADP</keyword>
<keyword id="KW-1185">Reference proteome</keyword>
<evidence type="ECO:0000255" key="1">
    <source>
        <dbReference type="HAMAP-Rule" id="MF_01601"/>
    </source>
</evidence>
<proteinExistence type="inferred from homology"/>
<name>HLDD_ECOL6</name>
<organism>
    <name type="scientific">Escherichia coli O6:H1 (strain CFT073 / ATCC 700928 / UPEC)</name>
    <dbReference type="NCBI Taxonomy" id="199310"/>
    <lineage>
        <taxon>Bacteria</taxon>
        <taxon>Pseudomonadati</taxon>
        <taxon>Pseudomonadota</taxon>
        <taxon>Gammaproteobacteria</taxon>
        <taxon>Enterobacterales</taxon>
        <taxon>Enterobacteriaceae</taxon>
        <taxon>Escherichia</taxon>
    </lineage>
</organism>
<dbReference type="EC" id="5.1.3.20" evidence="1"/>
<dbReference type="EMBL" id="AE014075">
    <property type="protein sequence ID" value="AAN82881.1"/>
    <property type="molecule type" value="Genomic_DNA"/>
</dbReference>
<dbReference type="RefSeq" id="WP_000587750.1">
    <property type="nucleotide sequence ID" value="NZ_CP051263.1"/>
</dbReference>
<dbReference type="SMR" id="Q8FCA0"/>
<dbReference type="STRING" id="199310.c4445"/>
<dbReference type="GeneID" id="93778334"/>
<dbReference type="KEGG" id="ecc:c4445"/>
<dbReference type="eggNOG" id="COG0451">
    <property type="taxonomic scope" value="Bacteria"/>
</dbReference>
<dbReference type="HOGENOM" id="CLU_007383_1_3_6"/>
<dbReference type="BioCyc" id="ECOL199310:C4445-MONOMER"/>
<dbReference type="UniPathway" id="UPA00356">
    <property type="reaction ID" value="UER00440"/>
</dbReference>
<dbReference type="UniPathway" id="UPA00958"/>
<dbReference type="Proteomes" id="UP000001410">
    <property type="component" value="Chromosome"/>
</dbReference>
<dbReference type="GO" id="GO:0008712">
    <property type="term" value="F:ADP-glyceromanno-heptose 6-epimerase activity"/>
    <property type="evidence" value="ECO:0007669"/>
    <property type="project" value="UniProtKB-UniRule"/>
</dbReference>
<dbReference type="GO" id="GO:0050661">
    <property type="term" value="F:NADP binding"/>
    <property type="evidence" value="ECO:0007669"/>
    <property type="project" value="InterPro"/>
</dbReference>
<dbReference type="GO" id="GO:0097171">
    <property type="term" value="P:ADP-L-glycero-beta-D-manno-heptose biosynthetic process"/>
    <property type="evidence" value="ECO:0007669"/>
    <property type="project" value="UniProtKB-UniPathway"/>
</dbReference>
<dbReference type="GO" id="GO:0009244">
    <property type="term" value="P:lipopolysaccharide core region biosynthetic process"/>
    <property type="evidence" value="ECO:0007669"/>
    <property type="project" value="UniProtKB-UniPathway"/>
</dbReference>
<dbReference type="CDD" id="cd05248">
    <property type="entry name" value="ADP_GME_SDR_e"/>
    <property type="match status" value="1"/>
</dbReference>
<dbReference type="Gene3D" id="3.40.50.720">
    <property type="entry name" value="NAD(P)-binding Rossmann-like Domain"/>
    <property type="match status" value="1"/>
</dbReference>
<dbReference type="Gene3D" id="3.90.25.10">
    <property type="entry name" value="UDP-galactose 4-epimerase, domain 1"/>
    <property type="match status" value="1"/>
</dbReference>
<dbReference type="HAMAP" id="MF_01601">
    <property type="entry name" value="Heptose_epimerase"/>
    <property type="match status" value="1"/>
</dbReference>
<dbReference type="InterPro" id="IPR001509">
    <property type="entry name" value="Epimerase_deHydtase"/>
</dbReference>
<dbReference type="InterPro" id="IPR011912">
    <property type="entry name" value="Heptose_epim"/>
</dbReference>
<dbReference type="InterPro" id="IPR036291">
    <property type="entry name" value="NAD(P)-bd_dom_sf"/>
</dbReference>
<dbReference type="NCBIfam" id="TIGR02197">
    <property type="entry name" value="heptose_epim"/>
    <property type="match status" value="1"/>
</dbReference>
<dbReference type="NCBIfam" id="NF008360">
    <property type="entry name" value="PRK11150.1"/>
    <property type="match status" value="1"/>
</dbReference>
<dbReference type="PANTHER" id="PTHR43103:SF3">
    <property type="entry name" value="ADP-L-GLYCERO-D-MANNO-HEPTOSE-6-EPIMERASE"/>
    <property type="match status" value="1"/>
</dbReference>
<dbReference type="PANTHER" id="PTHR43103">
    <property type="entry name" value="NUCLEOSIDE-DIPHOSPHATE-SUGAR EPIMERASE"/>
    <property type="match status" value="1"/>
</dbReference>
<dbReference type="Pfam" id="PF01370">
    <property type="entry name" value="Epimerase"/>
    <property type="match status" value="1"/>
</dbReference>
<dbReference type="SUPFAM" id="SSF51735">
    <property type="entry name" value="NAD(P)-binding Rossmann-fold domains"/>
    <property type="match status" value="1"/>
</dbReference>
<accession>Q8FCA0</accession>
<protein>
    <recommendedName>
        <fullName evidence="1">ADP-L-glycero-D-manno-heptose-6-epimerase</fullName>
        <ecNumber evidence="1">5.1.3.20</ecNumber>
    </recommendedName>
    <alternativeName>
        <fullName evidence="1">ADP-L-glycero-beta-D-manno-heptose-6-epimerase</fullName>
        <shortName evidence="1">ADP-glyceromanno-heptose 6-epimerase</shortName>
        <shortName evidence="1">ADP-hep 6-epimerase</shortName>
        <shortName evidence="1">AGME</shortName>
    </alternativeName>
</protein>
<feature type="chain" id="PRO_0000205794" description="ADP-L-glycero-D-manno-heptose-6-epimerase">
    <location>
        <begin position="1"/>
        <end position="310"/>
    </location>
</feature>
<feature type="active site" description="Proton acceptor" evidence="1">
    <location>
        <position position="140"/>
    </location>
</feature>
<feature type="active site" description="Proton acceptor" evidence="1">
    <location>
        <position position="178"/>
    </location>
</feature>
<feature type="binding site" evidence="1">
    <location>
        <begin position="10"/>
        <end position="11"/>
    </location>
    <ligand>
        <name>NADP(+)</name>
        <dbReference type="ChEBI" id="CHEBI:58349"/>
    </ligand>
</feature>
<feature type="binding site" evidence="1">
    <location>
        <begin position="31"/>
        <end position="32"/>
    </location>
    <ligand>
        <name>NADP(+)</name>
        <dbReference type="ChEBI" id="CHEBI:58349"/>
    </ligand>
</feature>
<feature type="binding site" evidence="1">
    <location>
        <position position="38"/>
    </location>
    <ligand>
        <name>NADP(+)</name>
        <dbReference type="ChEBI" id="CHEBI:58349"/>
    </ligand>
</feature>
<feature type="binding site" evidence="1">
    <location>
        <position position="53"/>
    </location>
    <ligand>
        <name>NADP(+)</name>
        <dbReference type="ChEBI" id="CHEBI:58349"/>
    </ligand>
</feature>
<feature type="binding site" evidence="1">
    <location>
        <begin position="75"/>
        <end position="79"/>
    </location>
    <ligand>
        <name>NADP(+)</name>
        <dbReference type="ChEBI" id="CHEBI:58349"/>
    </ligand>
</feature>
<feature type="binding site" evidence="1">
    <location>
        <position position="92"/>
    </location>
    <ligand>
        <name>NADP(+)</name>
        <dbReference type="ChEBI" id="CHEBI:58349"/>
    </ligand>
</feature>
<feature type="binding site" evidence="1">
    <location>
        <position position="144"/>
    </location>
    <ligand>
        <name>NADP(+)</name>
        <dbReference type="ChEBI" id="CHEBI:58349"/>
    </ligand>
</feature>
<feature type="binding site" evidence="1">
    <location>
        <position position="169"/>
    </location>
    <ligand>
        <name>substrate</name>
    </ligand>
</feature>
<feature type="binding site" evidence="1">
    <location>
        <position position="170"/>
    </location>
    <ligand>
        <name>NADP(+)</name>
        <dbReference type="ChEBI" id="CHEBI:58349"/>
    </ligand>
</feature>
<feature type="binding site" evidence="1">
    <location>
        <position position="178"/>
    </location>
    <ligand>
        <name>NADP(+)</name>
        <dbReference type="ChEBI" id="CHEBI:58349"/>
    </ligand>
</feature>
<feature type="binding site" evidence="1">
    <location>
        <position position="180"/>
    </location>
    <ligand>
        <name>substrate</name>
    </ligand>
</feature>
<feature type="binding site" evidence="1">
    <location>
        <position position="187"/>
    </location>
    <ligand>
        <name>substrate</name>
    </ligand>
</feature>
<feature type="binding site" evidence="1">
    <location>
        <begin position="201"/>
        <end position="204"/>
    </location>
    <ligand>
        <name>substrate</name>
    </ligand>
</feature>
<feature type="binding site" evidence="1">
    <location>
        <position position="209"/>
    </location>
    <ligand>
        <name>substrate</name>
    </ligand>
</feature>
<feature type="binding site" evidence="1">
    <location>
        <position position="272"/>
    </location>
    <ligand>
        <name>substrate</name>
    </ligand>
</feature>
<feature type="modified residue" description="N6-acetyllysine" evidence="1">
    <location>
        <position position="267"/>
    </location>
</feature>
<sequence length="310" mass="34894">MIIVTGGAGFIGSNIVKALNDKGITDILVVDNLKDGTKFVNLVDLDIADYMDKEDFLIQIMAGEEFGDVEAIFHEGACSSTTEWDGKYMMDNNYQYSKELLHYCLEREIPFLYASSAATYGGRTSDFIESREYEKPLNVYGYSKFLFDEYVRQILPEANSQIVGFRYFNVYGPREGHKGSMASVAFHLNTQLNNGESPKLFEGSENFKRDFVYVGDVADVNLWFLENGVSGIFNLGTGRAESFQAVADATLAYHKKGQIEYIPFPDKLKGRYQAFTQADLTNLRAAGYDKPFKTVAEGVTEYMAWLNRDA</sequence>
<comment type="function">
    <text evidence="1">Catalyzes the interconversion between ADP-D-glycero-beta-D-manno-heptose and ADP-L-glycero-beta-D-manno-heptose via an epimerization at carbon 6 of the heptose.</text>
</comment>
<comment type="catalytic activity">
    <reaction evidence="1">
        <text>ADP-D-glycero-beta-D-manno-heptose = ADP-L-glycero-beta-D-manno-heptose</text>
        <dbReference type="Rhea" id="RHEA:17577"/>
        <dbReference type="ChEBI" id="CHEBI:59967"/>
        <dbReference type="ChEBI" id="CHEBI:61506"/>
        <dbReference type="EC" id="5.1.3.20"/>
    </reaction>
</comment>
<comment type="cofactor">
    <cofactor evidence="1">
        <name>NADP(+)</name>
        <dbReference type="ChEBI" id="CHEBI:58349"/>
    </cofactor>
    <text evidence="1">Binds 1 NADP(+) per subunit.</text>
</comment>
<comment type="pathway">
    <text evidence="1">Nucleotide-sugar biosynthesis; ADP-L-glycero-beta-D-manno-heptose biosynthesis; ADP-L-glycero-beta-D-manno-heptose from D-glycero-beta-D-manno-heptose 7-phosphate: step 4/4.</text>
</comment>
<comment type="pathway">
    <text>Bacterial outer membrane biogenesis; LPS core biosynthesis.</text>
</comment>
<comment type="subunit">
    <text evidence="1">Homopentamer.</text>
</comment>
<comment type="domain">
    <text evidence="1">Contains a large N-terminal NADP-binding domain, and a smaller C-terminal substrate-binding domain.</text>
</comment>
<comment type="similarity">
    <text evidence="1">Belongs to the NAD(P)-dependent epimerase/dehydratase family. HldD subfamily.</text>
</comment>